<proteinExistence type="evidence at protein level"/>
<dbReference type="EC" id="2.4.1.224" evidence="4 5"/>
<dbReference type="EMBL" id="AF089748">
    <property type="protein sequence ID" value="AAC35386.1"/>
    <property type="molecule type" value="mRNA"/>
</dbReference>
<dbReference type="SMR" id="O77783"/>
<dbReference type="FunCoup" id="O77783">
    <property type="interactions" value="3152"/>
</dbReference>
<dbReference type="STRING" id="9913.ENSBTAP00000026177"/>
<dbReference type="CAZy" id="GT47">
    <property type="family name" value="Glycosyltransferase Family 47"/>
</dbReference>
<dbReference type="CAZy" id="GT64">
    <property type="family name" value="Glycosyltransferase Family 64"/>
</dbReference>
<dbReference type="GlyCosmos" id="O77783">
    <property type="glycosylation" value="2 sites, No reported glycans"/>
</dbReference>
<dbReference type="GlyGen" id="O77783">
    <property type="glycosylation" value="2 sites"/>
</dbReference>
<dbReference type="PaxDb" id="9913-ENSBTAP00000026177"/>
<dbReference type="eggNOG" id="KOG1022">
    <property type="taxonomic scope" value="Eukaryota"/>
</dbReference>
<dbReference type="InParanoid" id="O77783"/>
<dbReference type="OrthoDB" id="5954868at2759"/>
<dbReference type="BRENDA" id="2.4.1.224">
    <property type="organism ID" value="908"/>
</dbReference>
<dbReference type="BRENDA" id="2.4.1.225">
    <property type="organism ID" value="908"/>
</dbReference>
<dbReference type="UniPathway" id="UPA00378"/>
<dbReference type="Proteomes" id="UP000009136">
    <property type="component" value="Unplaced"/>
</dbReference>
<dbReference type="GO" id="GO:1902494">
    <property type="term" value="C:catalytic complex"/>
    <property type="evidence" value="ECO:0000250"/>
    <property type="project" value="UniProtKB"/>
</dbReference>
<dbReference type="GO" id="GO:0005783">
    <property type="term" value="C:endoplasmic reticulum"/>
    <property type="evidence" value="ECO:0000250"/>
    <property type="project" value="UniProtKB"/>
</dbReference>
<dbReference type="GO" id="GO:0005789">
    <property type="term" value="C:endoplasmic reticulum membrane"/>
    <property type="evidence" value="ECO:0007669"/>
    <property type="project" value="UniProtKB-SubCell"/>
</dbReference>
<dbReference type="GO" id="GO:0005615">
    <property type="term" value="C:extracellular space"/>
    <property type="evidence" value="ECO:0000314"/>
    <property type="project" value="BHF-UCL"/>
</dbReference>
<dbReference type="GO" id="GO:0005794">
    <property type="term" value="C:Golgi apparatus"/>
    <property type="evidence" value="ECO:0000250"/>
    <property type="project" value="UniProtKB"/>
</dbReference>
<dbReference type="GO" id="GO:0000139">
    <property type="term" value="C:Golgi membrane"/>
    <property type="evidence" value="ECO:0007669"/>
    <property type="project" value="UniProtKB-SubCell"/>
</dbReference>
<dbReference type="GO" id="GO:0016020">
    <property type="term" value="C:membrane"/>
    <property type="evidence" value="ECO:0000303"/>
    <property type="project" value="UniProtKB"/>
</dbReference>
<dbReference type="GO" id="GO:0008375">
    <property type="term" value="F:acetylglucosaminyltransferase activity"/>
    <property type="evidence" value="ECO:0000314"/>
    <property type="project" value="BHF-UCL"/>
</dbReference>
<dbReference type="GO" id="GO:0050508">
    <property type="term" value="F:glucuronosyl-N-acetylglucosaminyl-proteoglycan 4-alpha-N-acetylglucosaminyltransferase activity"/>
    <property type="evidence" value="ECO:0000314"/>
    <property type="project" value="UniProtKB"/>
</dbReference>
<dbReference type="GO" id="GO:0015020">
    <property type="term" value="F:glucuronosyltransferase activity"/>
    <property type="evidence" value="ECO:0000314"/>
    <property type="project" value="BHF-UCL"/>
</dbReference>
<dbReference type="GO" id="GO:0046872">
    <property type="term" value="F:metal ion binding"/>
    <property type="evidence" value="ECO:0007669"/>
    <property type="project" value="UniProtKB-KW"/>
</dbReference>
<dbReference type="GO" id="GO:0050509">
    <property type="term" value="F:N-acetylglucosaminyl-proteoglycan 4-beta-glucuronosyltransferase activity"/>
    <property type="evidence" value="ECO:0000314"/>
    <property type="project" value="UniProtKB"/>
</dbReference>
<dbReference type="GO" id="GO:0015012">
    <property type="term" value="P:heparan sulfate proteoglycan biosynthetic process"/>
    <property type="evidence" value="ECO:0000314"/>
    <property type="project" value="UniProtKB"/>
</dbReference>
<dbReference type="GO" id="GO:0006486">
    <property type="term" value="P:protein glycosylation"/>
    <property type="evidence" value="ECO:0007669"/>
    <property type="project" value="UniProtKB-UniPathway"/>
</dbReference>
<dbReference type="FunFam" id="3.90.550.10:FF:000035">
    <property type="entry name" value="Putative Exostosin-2"/>
    <property type="match status" value="1"/>
</dbReference>
<dbReference type="Gene3D" id="3.90.550.10">
    <property type="entry name" value="Spore Coat Polysaccharide Biosynthesis Protein SpsA, Chain A"/>
    <property type="match status" value="1"/>
</dbReference>
<dbReference type="InterPro" id="IPR004263">
    <property type="entry name" value="Exostosin"/>
</dbReference>
<dbReference type="InterPro" id="IPR040911">
    <property type="entry name" value="Exostosin_GT47"/>
</dbReference>
<dbReference type="InterPro" id="IPR015338">
    <property type="entry name" value="GT64_dom"/>
</dbReference>
<dbReference type="InterPro" id="IPR029044">
    <property type="entry name" value="Nucleotide-diphossugar_trans"/>
</dbReference>
<dbReference type="PANTHER" id="PTHR48261">
    <property type="entry name" value="ACETYLGLUCOSAMINYLTRANSFERASE"/>
    <property type="match status" value="1"/>
</dbReference>
<dbReference type="PANTHER" id="PTHR48261:SF5">
    <property type="entry name" value="EXOSTOSIN GLYCOSYLTRANSFERASE 2"/>
    <property type="match status" value="1"/>
</dbReference>
<dbReference type="Pfam" id="PF03016">
    <property type="entry name" value="Exostosin_GT47"/>
    <property type="match status" value="1"/>
</dbReference>
<dbReference type="Pfam" id="PF09258">
    <property type="entry name" value="Glyco_transf_64"/>
    <property type="match status" value="1"/>
</dbReference>
<dbReference type="SUPFAM" id="SSF53448">
    <property type="entry name" value="Nucleotide-diphospho-sugar transferases"/>
    <property type="match status" value="1"/>
</dbReference>
<evidence type="ECO:0000250" key="1">
    <source>
        <dbReference type="UniProtKB" id="Q93063"/>
    </source>
</evidence>
<evidence type="ECO:0000250" key="2">
    <source>
        <dbReference type="UniProtKB" id="Q9ES89"/>
    </source>
</evidence>
<evidence type="ECO:0000255" key="3"/>
<evidence type="ECO:0000269" key="4">
    <source>
    </source>
</evidence>
<evidence type="ECO:0000269" key="5">
    <source>
    </source>
</evidence>
<evidence type="ECO:0000303" key="6">
    <source>
    </source>
</evidence>
<evidence type="ECO:0000305" key="7"/>
<evidence type="ECO:0000305" key="8">
    <source>
    </source>
</evidence>
<keyword id="KW-0903">Direct protein sequencing</keyword>
<keyword id="KW-1015">Disulfide bond</keyword>
<keyword id="KW-0256">Endoplasmic reticulum</keyword>
<keyword id="KW-0325">Glycoprotein</keyword>
<keyword id="KW-0328">Glycosyltransferase</keyword>
<keyword id="KW-0333">Golgi apparatus</keyword>
<keyword id="KW-0464">Manganese</keyword>
<keyword id="KW-0472">Membrane</keyword>
<keyword id="KW-0479">Metal-binding</keyword>
<keyword id="KW-1185">Reference proteome</keyword>
<keyword id="KW-0964">Secreted</keyword>
<keyword id="KW-0735">Signal-anchor</keyword>
<keyword id="KW-0808">Transferase</keyword>
<keyword id="KW-0812">Transmembrane</keyword>
<keyword id="KW-1133">Transmembrane helix</keyword>
<accession>O77783</accession>
<feature type="chain" id="PRO_0000149650" description="Exostosin-2">
    <location>
        <begin position="1"/>
        <end position="718"/>
    </location>
</feature>
<feature type="topological domain" description="Cytoplasmic" evidence="3">
    <location>
        <begin position="1"/>
        <end position="25"/>
    </location>
</feature>
<feature type="transmembrane region" description="Helical; Signal-anchor for type II membrane protein" evidence="3">
    <location>
        <begin position="26"/>
        <end position="46"/>
    </location>
</feature>
<feature type="topological domain" description="Lumenal" evidence="3">
    <location>
        <begin position="47"/>
        <end position="718"/>
    </location>
</feature>
<feature type="binding site" evidence="1">
    <location>
        <position position="461"/>
    </location>
    <ligand>
        <name>UDP</name>
        <dbReference type="ChEBI" id="CHEBI:58223"/>
    </ligand>
</feature>
<feature type="binding site" evidence="1">
    <location>
        <position position="465"/>
    </location>
    <ligand>
        <name>UDP</name>
        <dbReference type="ChEBI" id="CHEBI:58223"/>
    </ligand>
</feature>
<feature type="binding site" evidence="2">
    <location>
        <position position="465"/>
    </location>
    <ligand>
        <name>UDP-N-acetyl-alpha-D-glucosamine</name>
        <dbReference type="ChEBI" id="CHEBI:57705"/>
    </ligand>
</feature>
<feature type="binding site" evidence="1">
    <location>
        <position position="490"/>
    </location>
    <ligand>
        <name>UDP</name>
        <dbReference type="ChEBI" id="CHEBI:58223"/>
    </ligand>
</feature>
<feature type="binding site" evidence="2">
    <location>
        <position position="490"/>
    </location>
    <ligand>
        <name>UDP-N-acetyl-alpha-D-glucosamine</name>
        <dbReference type="ChEBI" id="CHEBI:57705"/>
    </ligand>
</feature>
<feature type="binding site" evidence="1">
    <location>
        <position position="517"/>
    </location>
    <ligand>
        <name>UDP</name>
        <dbReference type="ChEBI" id="CHEBI:58223"/>
    </ligand>
</feature>
<feature type="binding site" evidence="2">
    <location>
        <position position="517"/>
    </location>
    <ligand>
        <name>UDP-N-acetyl-alpha-D-glucosamine</name>
        <dbReference type="ChEBI" id="CHEBI:57705"/>
    </ligand>
</feature>
<feature type="binding site" evidence="2">
    <location>
        <position position="522"/>
    </location>
    <ligand>
        <name>UDP-N-acetyl-alpha-D-glucosamine</name>
        <dbReference type="ChEBI" id="CHEBI:57705"/>
    </ligand>
</feature>
<feature type="binding site" evidence="1">
    <location>
        <position position="538"/>
    </location>
    <ligand>
        <name>UDP</name>
        <dbReference type="ChEBI" id="CHEBI:58223"/>
    </ligand>
</feature>
<feature type="binding site" evidence="2">
    <location>
        <position position="538"/>
    </location>
    <ligand>
        <name>UDP-N-acetyl-alpha-D-glucosamine</name>
        <dbReference type="ChEBI" id="CHEBI:57705"/>
    </ligand>
</feature>
<feature type="binding site" evidence="1">
    <location>
        <position position="539"/>
    </location>
    <ligand>
        <name>UDP</name>
        <dbReference type="ChEBI" id="CHEBI:58223"/>
    </ligand>
</feature>
<feature type="binding site" evidence="2">
    <location>
        <position position="539"/>
    </location>
    <ligand>
        <name>UDP-N-acetyl-alpha-D-glucosamine</name>
        <dbReference type="ChEBI" id="CHEBI:57705"/>
    </ligand>
</feature>
<feature type="binding site" evidence="2">
    <location>
        <position position="540"/>
    </location>
    <ligand>
        <name>Mn(2+)</name>
        <dbReference type="ChEBI" id="CHEBI:29035"/>
        <note>catalytic</note>
    </ligand>
</feature>
<feature type="binding site" evidence="2">
    <location>
        <position position="540"/>
    </location>
    <ligand>
        <name>UDP-N-acetyl-alpha-D-glucosamine</name>
        <dbReference type="ChEBI" id="CHEBI:57705"/>
    </ligand>
</feature>
<feature type="binding site" evidence="1">
    <location>
        <position position="582"/>
    </location>
    <ligand>
        <name>a protein</name>
        <dbReference type="ChEBI" id="CHEBI:16541"/>
    </ligand>
    <ligandPart>
        <name>O(3)-(poly[(1-&gt;4)-beta-D-glucuronosyl-(1-&gt;4)-N-acetyl-alpha-D-glucosaminyl]-(1-&gt;4)-beta-D-glucuronosyl-(1-&gt;3)-beta-D-galactosyl-(1-&gt;3)-beta-D-galactosyl-(1-&gt;4)-beta-D-xylosyl)-L-serine residue</name>
        <dbReference type="ChEBI" id="CHEBI:132415"/>
    </ligandPart>
</feature>
<feature type="binding site" evidence="1">
    <location>
        <position position="584"/>
    </location>
    <ligand>
        <name>a protein</name>
        <dbReference type="ChEBI" id="CHEBI:16541"/>
    </ligand>
    <ligandPart>
        <name>O(3)-(poly[(1-&gt;4)-beta-D-glucuronosyl-(1-&gt;4)-N-acetyl-alpha-D-glucosaminyl]-(1-&gt;4)-beta-D-glucuronosyl-(1-&gt;3)-beta-D-galactosyl-(1-&gt;3)-beta-D-galactosyl-(1-&gt;4)-beta-D-xylosyl)-L-serine residue</name>
        <dbReference type="ChEBI" id="CHEBI:132415"/>
    </ligandPart>
</feature>
<feature type="binding site" evidence="2">
    <location>
        <position position="627"/>
    </location>
    <ligand>
        <name>UDP-N-acetyl-alpha-D-glucosamine</name>
        <dbReference type="ChEBI" id="CHEBI:57705"/>
    </ligand>
</feature>
<feature type="binding site" evidence="2">
    <location>
        <position position="628"/>
    </location>
    <ligand>
        <name>UDP-N-acetyl-alpha-D-glucosamine</name>
        <dbReference type="ChEBI" id="CHEBI:57705"/>
    </ligand>
</feature>
<feature type="binding site" evidence="1">
    <location>
        <position position="651"/>
    </location>
    <ligand>
        <name>a protein</name>
        <dbReference type="ChEBI" id="CHEBI:16541"/>
    </ligand>
    <ligandPart>
        <name>O(3)-(poly[(1-&gt;4)-beta-D-glucuronosyl-(1-&gt;4)-N-acetyl-alpha-D-glucosaminyl]-(1-&gt;4)-beta-D-glucuronosyl-(1-&gt;3)-beta-D-galactosyl-(1-&gt;3)-beta-D-galactosyl-(1-&gt;4)-beta-D-xylosyl)-L-serine residue</name>
        <dbReference type="ChEBI" id="CHEBI:132415"/>
    </ligandPart>
</feature>
<feature type="binding site" evidence="1">
    <location>
        <position position="653"/>
    </location>
    <ligand>
        <name>a protein</name>
        <dbReference type="ChEBI" id="CHEBI:16541"/>
    </ligand>
    <ligandPart>
        <name>O(3)-(poly[(1-&gt;4)-beta-D-glucuronosyl-(1-&gt;4)-N-acetyl-alpha-D-glucosaminyl]-(1-&gt;4)-beta-D-glucuronosyl-(1-&gt;3)-beta-D-galactosyl-(1-&gt;3)-beta-D-galactosyl-(1-&gt;4)-beta-D-xylosyl)-L-serine residue</name>
        <dbReference type="ChEBI" id="CHEBI:132415"/>
    </ligandPart>
</feature>
<feature type="binding site" evidence="2">
    <location>
        <position position="673"/>
    </location>
    <ligand>
        <name>UDP-N-acetyl-alpha-D-glucosamine</name>
        <dbReference type="ChEBI" id="CHEBI:57705"/>
    </ligand>
</feature>
<feature type="glycosylation site" description="N-linked (GlcNAc...) asparagine" evidence="3">
    <location>
        <position position="288"/>
    </location>
</feature>
<feature type="glycosylation site" description="N-linked (GlcNAc...) asparagine" evidence="3">
    <location>
        <position position="637"/>
    </location>
</feature>
<feature type="disulfide bond" evidence="1">
    <location>
        <begin position="85"/>
        <end position="90"/>
    </location>
</feature>
<feature type="disulfide bond" evidence="1">
    <location>
        <begin position="96"/>
        <end position="151"/>
    </location>
</feature>
<feature type="disulfide bond" evidence="1">
    <location>
        <begin position="286"/>
        <end position="300"/>
    </location>
</feature>
<feature type="disulfide bond" evidence="1">
    <location>
        <begin position="318"/>
        <end position="339"/>
    </location>
</feature>
<feature type="disulfide bond" evidence="2">
    <location>
        <begin position="626"/>
        <end position="676"/>
    </location>
</feature>
<sequence>MCASVKYNIRGPALIPRMKTKHRIYYITLFSIVLLGLIATGMFQFWPHSIESSGDWSVEKRTGRDVPLVRLPADSPVPERGDLSCRMHTCFDVYRCGFNPKNKIKVYIYPLKKYVGEAGVPVSSTISREYNELLTAISDSDYYTDDVTRACLFVPSIDLLNQNSLRVKETAQALAQLSRWDRGTNHLLFNMLPGGPPDYNTALDVPRDRALLAGGGFSTWTYRQGYDVSIPVYSPLSAEVDLPEKGPGPRRYFLLSSQVALHPEYREDLAALQARHGEAVLVLDKCSNLSEGVPAARRRCHQQQAFDYPQVLQEATFCMVLRGARLGQAVLSDVLRAGCVPVIIADSYVLPFSEVLDWKRASVVVPEEKMSDVYSILQSIPRRQIEEMQRQARWFWEAYFQSIKAIALATLQIINDRIYPYAAISYEDWNDPPAVKWGSVSNPLFLPLIPPQSQGFTAIVLTYDRVESLFRVITEVSKVPSLSKLLVVWNNQNKNPPEDSLWPKIRVPLKVVRTAENKLSNRFFPYDEIETEAVLAIDDDIIMLTSDELQFGYEVWREFPDRLVGYPGRLHLWDHEMNKWKYESEWTNEVSMVLTGAAFYHKYFNYLYTYKMPGDIKNWVDAHMNCEDIAMNFLVANVTGKAVIKVTPRKKFKCPECTAIDGLSLDQTHMVERSECINKFASVFGTMPLKVVEHRADPVLYKDDFPEKLKSFPNIGSL</sequence>
<name>EXT2_BOVIN</name>
<organism>
    <name type="scientific">Bos taurus</name>
    <name type="common">Bovine</name>
    <dbReference type="NCBI Taxonomy" id="9913"/>
    <lineage>
        <taxon>Eukaryota</taxon>
        <taxon>Metazoa</taxon>
        <taxon>Chordata</taxon>
        <taxon>Craniata</taxon>
        <taxon>Vertebrata</taxon>
        <taxon>Euteleostomi</taxon>
        <taxon>Mammalia</taxon>
        <taxon>Eutheria</taxon>
        <taxon>Laurasiatheria</taxon>
        <taxon>Artiodactyla</taxon>
        <taxon>Ruminantia</taxon>
        <taxon>Pecora</taxon>
        <taxon>Bovidae</taxon>
        <taxon>Bovinae</taxon>
        <taxon>Bos</taxon>
    </lineage>
</organism>
<protein>
    <recommendedName>
        <fullName evidence="7">Exostosin-2</fullName>
        <ecNumber evidence="4 5">2.4.1.224</ecNumber>
    </recommendedName>
    <alternativeName>
        <fullName evidence="8">Glucuronosyl-N-acetylglucosaminyl-proteoglycan 4-alpha-N-acetylglucosaminyltransferase</fullName>
    </alternativeName>
    <alternativeName>
        <fullName evidence="6">HS-polymerase</fullName>
        <shortName evidence="6">HS-POL</shortName>
    </alternativeName>
</protein>
<gene>
    <name evidence="6" type="primary">EXT2</name>
</gene>
<comment type="function">
    <text evidence="1 4 5">Glycosyltransferase forming with EXT1 the heterodimeric heparan sulfate polymerase which catalyzes the elongation of the heparan sulfate glycan backbone. Glycan backbone extension consists in the alternating transfer of (1-&gt;4)-beta-D-GlcA and (1-&gt;4)-alpha-D-GlcNAc residues from their respective UDP-sugar donors (PubMed:10639137, PubMed:9756849). Both EXT1 and EXT2 are required for the full activity of the polymerase since EXT1 bears the N-acetylglucosaminyl-proteoglycan 4-beta-glucuronosyltransferase activity within the complex while EXT2 carries the glucuronosyl-N-acetylglucosaminyl-proteoglycan 4-alpha-N-acetylglucosaminyltransferase activity (By similarity). Heparan sulfate proteoglycans are ubiquitous components of the extracellular matrix and play an important role in tissue homeostasis and signaling (By similarity).</text>
</comment>
<comment type="catalytic activity">
    <reaction evidence="4 5">
        <text>3-O-{[(1-&gt;4)-beta-D-GlcA-(1-&gt;4)-alpha-D-GlcNAc](n)-(1-&gt;4)-beta-D-GlcA-(1-&gt;3)-beta-D-Gal-(1-&gt;3)-beta-D-Gal-(1-&gt;4)-beta-D-Xyl}-L-seryl-[protein] + UDP-N-acetyl-alpha-D-glucosamine = 3-O-{alpha-D-GlcNAc-[(1-&gt;4)-beta-D-GlcA-(1-&gt;4)-alpha-D-GlcNAc](n)-(1-&gt;4)-beta-D-GlcA-(1-&gt;3)-beta-D-Gal-(1-&gt;3)-beta-D-Gal-(1-&gt;4)-beta-D-Xyl}-L-seryl-[protein] + UDP + H(+)</text>
        <dbReference type="Rhea" id="RHEA:16213"/>
        <dbReference type="Rhea" id="RHEA-COMP:12621"/>
        <dbReference type="Rhea" id="RHEA-COMP:12623"/>
        <dbReference type="ChEBI" id="CHEBI:15378"/>
        <dbReference type="ChEBI" id="CHEBI:57705"/>
        <dbReference type="ChEBI" id="CHEBI:58223"/>
        <dbReference type="ChEBI" id="CHEBI:132415"/>
        <dbReference type="ChEBI" id="CHEBI:132416"/>
        <dbReference type="EC" id="2.4.1.224"/>
    </reaction>
    <physiologicalReaction direction="left-to-right" evidence="8">
        <dbReference type="Rhea" id="RHEA:16214"/>
    </physiologicalReaction>
</comment>
<comment type="cofactor">
    <cofactor evidence="1">
        <name>Mn(2+)</name>
        <dbReference type="ChEBI" id="CHEBI:29035"/>
    </cofactor>
</comment>
<comment type="pathway">
    <text evidence="4 5">Protein modification; protein glycosylation.</text>
</comment>
<comment type="subunit">
    <text evidence="1">Part of the heparan sulfate polymerase, a dimeric complex composed of EXT1 and EXT2. Could also form homooligomeric complexes. Interacts with NDST1. Interacts with GALNT5.</text>
</comment>
<comment type="subcellular location">
    <subcellularLocation>
        <location evidence="1">Golgi apparatus membrane</location>
        <topology evidence="3">Single-pass type II membrane protein</topology>
    </subcellularLocation>
    <subcellularLocation>
        <location evidence="1">Golgi apparatus</location>
        <location evidence="1">cis-Golgi network membrane</location>
        <topology evidence="3">Single-pass type II membrane protein</topology>
    </subcellularLocation>
    <subcellularLocation>
        <location evidence="1">Endoplasmic reticulum membrane</location>
        <topology evidence="3">Single-pass type II membrane protein</topology>
    </subcellularLocation>
    <subcellularLocation>
        <location evidence="5">Secreted</location>
    </subcellularLocation>
    <text evidence="1 5">The active heparan sulfate polymerase complex composed of EXT1 and EXT2 is localized in the Golgi apparatus though both proteins are also detected in the endoplasmic reticulum (By similarity). A soluble form is found in the serum (PubMed:9756849).</text>
</comment>
<comment type="PTM">
    <text evidence="5">A soluble form is generated by proteolytic processing.</text>
</comment>
<comment type="PTM">
    <text evidence="1">N-glycosylated at Asn-637.</text>
</comment>
<comment type="similarity">
    <text evidence="7">Belongs to the glycosyltransferase 47 family.</text>
</comment>
<reference key="1">
    <citation type="journal article" date="1998" name="J. Biol. Chem.">
        <title>The putative tumor suppressors EXT1 and EXT2 are glycosyltransferases required for the biosynthesis of heparan sulfate.</title>
        <authorList>
            <person name="Lind T."/>
            <person name="Tufaro F."/>
            <person name="McCormick C."/>
            <person name="Lindahl U."/>
            <person name="Lidholt K."/>
        </authorList>
    </citation>
    <scope>NUCLEOTIDE SEQUENCE [MRNA]</scope>
    <scope>PROTEIN SEQUENCE OF 129-147; 167-179; 485-494 AND 570-577</scope>
    <scope>FUNCTION</scope>
    <scope>CATALYTIC ACTIVITY</scope>
    <scope>PATHWAY</scope>
    <scope>SUBCELLULAR LOCATION</scope>
    <scope>PTM</scope>
    <source>
        <tissue>Lung</tissue>
    </source>
</reference>
<reference key="2">
    <citation type="journal article" date="2000" name="Proc. Natl. Acad. Sci. U.S.A.">
        <title>The putative tumor suppressors EXT1 and EXT2 form a stable complex that accumulates in the Golgi apparatus and catalyzes the synthesis of heparan sulfate.</title>
        <authorList>
            <person name="McCormick C."/>
            <person name="Duncan G."/>
            <person name="Goutsos K.T."/>
            <person name="Tufaro F."/>
        </authorList>
    </citation>
    <scope>FUNCTION</scope>
    <scope>CATALYTIC ACTIVITY</scope>
    <scope>PATHWAY</scope>
</reference>